<accession>A1WZ65</accession>
<comment type="function">
    <text evidence="1">The RuvA-RuvB-RuvC complex processes Holliday junction (HJ) DNA during genetic recombination and DNA repair, while the RuvA-RuvB complex plays an important role in the rescue of blocked DNA replication forks via replication fork reversal (RFR). RuvA specifically binds to HJ cruciform DNA, conferring on it an open structure. The RuvB hexamer acts as an ATP-dependent pump, pulling dsDNA into and through the RuvAB complex. RuvB forms 2 homohexamers on either side of HJ DNA bound by 1 or 2 RuvA tetramers; 4 subunits per hexamer contact DNA at a time. Coordinated motions by a converter formed by DNA-disengaged RuvB subunits stimulates ATP hydrolysis and nucleotide exchange. Immobilization of the converter enables RuvB to convert the ATP-contained energy into a lever motion, pulling 2 nucleotides of DNA out of the RuvA tetramer per ATP hydrolyzed, thus driving DNA branch migration. The RuvB motors rotate together with the DNA substrate, which together with the progressing nucleotide cycle form the mechanistic basis for DNA recombination by continuous HJ branch migration. Branch migration allows RuvC to scan DNA until it finds its consensus sequence, where it cleaves and resolves cruciform DNA.</text>
</comment>
<comment type="catalytic activity">
    <reaction evidence="1">
        <text>ATP + H2O = ADP + phosphate + H(+)</text>
        <dbReference type="Rhea" id="RHEA:13065"/>
        <dbReference type="ChEBI" id="CHEBI:15377"/>
        <dbReference type="ChEBI" id="CHEBI:15378"/>
        <dbReference type="ChEBI" id="CHEBI:30616"/>
        <dbReference type="ChEBI" id="CHEBI:43474"/>
        <dbReference type="ChEBI" id="CHEBI:456216"/>
    </reaction>
</comment>
<comment type="subunit">
    <text evidence="1">Homohexamer. Forms an RuvA(8)-RuvB(12)-Holliday junction (HJ) complex. HJ DNA is sandwiched between 2 RuvA tetramers; dsDNA enters through RuvA and exits via RuvB. An RuvB hexamer assembles on each DNA strand where it exits the tetramer. Each RuvB hexamer is contacted by two RuvA subunits (via domain III) on 2 adjacent RuvB subunits; this complex drives branch migration. In the full resolvosome a probable DNA-RuvA(4)-RuvB(12)-RuvC(2) complex forms which resolves the HJ.</text>
</comment>
<comment type="subcellular location">
    <subcellularLocation>
        <location evidence="1">Cytoplasm</location>
    </subcellularLocation>
</comment>
<comment type="domain">
    <text evidence="1">Has 3 domains, the large (RuvB-L) and small ATPase (RuvB-S) domains and the C-terminal head (RuvB-H) domain. The head domain binds DNA, while the ATPase domains jointly bind ATP, ADP or are empty depending on the state of the subunit in the translocation cycle. During a single DNA translocation step the structure of each domain remains the same, but their relative positions change.</text>
</comment>
<comment type="similarity">
    <text evidence="1">Belongs to the RuvB family.</text>
</comment>
<keyword id="KW-0067">ATP-binding</keyword>
<keyword id="KW-0963">Cytoplasm</keyword>
<keyword id="KW-0227">DNA damage</keyword>
<keyword id="KW-0233">DNA recombination</keyword>
<keyword id="KW-0234">DNA repair</keyword>
<keyword id="KW-0238">DNA-binding</keyword>
<keyword id="KW-0378">Hydrolase</keyword>
<keyword id="KW-0547">Nucleotide-binding</keyword>
<keyword id="KW-1185">Reference proteome</keyword>
<evidence type="ECO:0000255" key="1">
    <source>
        <dbReference type="HAMAP-Rule" id="MF_00016"/>
    </source>
</evidence>
<proteinExistence type="inferred from homology"/>
<name>RUVB_HALHL</name>
<sequence>MSDEYGPPERIIDAAGTGDEAALERALRPVSLDEYVGQTGVREQLEIFIRAARGRDEPLDHTLLFGPPGLGKTTLANIIATEMGASLRQSSGPVLDRPGDLAAILTNLEPGDVLFIDEIHRLSSVVEEVLYPAMEDFRIDIVIGEGPAARSIKLDLPPFTLVGATTRAGLLTSPLRDRFGIVQRLAYYPVDELTRIVQRSAGRLGVSTEAHGAAEIARRARGTPRVANRLLRRVRDFAEVRADGRITEQVAADAMELLDVDRNGLDEQDRRLLEAVVHKFGGGPVGLDNLATAIGEERGTLEDVVEPYLIQEGYLMRTPRGRVATEHAYTLLGVPGQAAGSGDLFG</sequence>
<reference key="1">
    <citation type="submission" date="2006-12" db="EMBL/GenBank/DDBJ databases">
        <title>Complete sequence of Halorhodospira halophila SL1.</title>
        <authorList>
            <consortium name="US DOE Joint Genome Institute"/>
            <person name="Copeland A."/>
            <person name="Lucas S."/>
            <person name="Lapidus A."/>
            <person name="Barry K."/>
            <person name="Detter J.C."/>
            <person name="Glavina del Rio T."/>
            <person name="Hammon N."/>
            <person name="Israni S."/>
            <person name="Dalin E."/>
            <person name="Tice H."/>
            <person name="Pitluck S."/>
            <person name="Saunders E."/>
            <person name="Brettin T."/>
            <person name="Bruce D."/>
            <person name="Han C."/>
            <person name="Tapia R."/>
            <person name="Schmutz J."/>
            <person name="Larimer F."/>
            <person name="Land M."/>
            <person name="Hauser L."/>
            <person name="Kyrpides N."/>
            <person name="Mikhailova N."/>
            <person name="Hoff W."/>
            <person name="Richardson P."/>
        </authorList>
    </citation>
    <scope>NUCLEOTIDE SEQUENCE [LARGE SCALE GENOMIC DNA]</scope>
    <source>
        <strain>DSM 244 / SL1</strain>
    </source>
</reference>
<protein>
    <recommendedName>
        <fullName evidence="1">Holliday junction branch migration complex subunit RuvB</fullName>
        <ecNumber evidence="1">3.6.4.-</ecNumber>
    </recommendedName>
</protein>
<feature type="chain" id="PRO_0000322798" description="Holliday junction branch migration complex subunit RuvB">
    <location>
        <begin position="1"/>
        <end position="346"/>
    </location>
</feature>
<feature type="region of interest" description="Large ATPase domain (RuvB-L)" evidence="1">
    <location>
        <begin position="1"/>
        <end position="188"/>
    </location>
</feature>
<feature type="region of interest" description="Small ATPAse domain (RuvB-S)" evidence="1">
    <location>
        <begin position="189"/>
        <end position="259"/>
    </location>
</feature>
<feature type="region of interest" description="Head domain (RuvB-H)" evidence="1">
    <location>
        <begin position="262"/>
        <end position="346"/>
    </location>
</feature>
<feature type="binding site" evidence="1">
    <location>
        <position position="27"/>
    </location>
    <ligand>
        <name>ATP</name>
        <dbReference type="ChEBI" id="CHEBI:30616"/>
    </ligand>
</feature>
<feature type="binding site" evidence="1">
    <location>
        <position position="28"/>
    </location>
    <ligand>
        <name>ATP</name>
        <dbReference type="ChEBI" id="CHEBI:30616"/>
    </ligand>
</feature>
<feature type="binding site" evidence="1">
    <location>
        <position position="69"/>
    </location>
    <ligand>
        <name>ATP</name>
        <dbReference type="ChEBI" id="CHEBI:30616"/>
    </ligand>
</feature>
<feature type="binding site" evidence="1">
    <location>
        <position position="72"/>
    </location>
    <ligand>
        <name>ATP</name>
        <dbReference type="ChEBI" id="CHEBI:30616"/>
    </ligand>
</feature>
<feature type="binding site" evidence="1">
    <location>
        <position position="73"/>
    </location>
    <ligand>
        <name>ATP</name>
        <dbReference type="ChEBI" id="CHEBI:30616"/>
    </ligand>
</feature>
<feature type="binding site" evidence="1">
    <location>
        <position position="73"/>
    </location>
    <ligand>
        <name>Mg(2+)</name>
        <dbReference type="ChEBI" id="CHEBI:18420"/>
    </ligand>
</feature>
<feature type="binding site" evidence="1">
    <location>
        <position position="74"/>
    </location>
    <ligand>
        <name>ATP</name>
        <dbReference type="ChEBI" id="CHEBI:30616"/>
    </ligand>
</feature>
<feature type="binding site" evidence="1">
    <location>
        <begin position="135"/>
        <end position="137"/>
    </location>
    <ligand>
        <name>ATP</name>
        <dbReference type="ChEBI" id="CHEBI:30616"/>
    </ligand>
</feature>
<feature type="binding site" evidence="1">
    <location>
        <position position="178"/>
    </location>
    <ligand>
        <name>ATP</name>
        <dbReference type="ChEBI" id="CHEBI:30616"/>
    </ligand>
</feature>
<feature type="binding site" evidence="1">
    <location>
        <position position="188"/>
    </location>
    <ligand>
        <name>ATP</name>
        <dbReference type="ChEBI" id="CHEBI:30616"/>
    </ligand>
</feature>
<feature type="binding site" evidence="1">
    <location>
        <position position="225"/>
    </location>
    <ligand>
        <name>ATP</name>
        <dbReference type="ChEBI" id="CHEBI:30616"/>
    </ligand>
</feature>
<feature type="binding site" evidence="1">
    <location>
        <position position="298"/>
    </location>
    <ligand>
        <name>DNA</name>
        <dbReference type="ChEBI" id="CHEBI:16991"/>
    </ligand>
</feature>
<feature type="binding site" evidence="1">
    <location>
        <position position="317"/>
    </location>
    <ligand>
        <name>DNA</name>
        <dbReference type="ChEBI" id="CHEBI:16991"/>
    </ligand>
</feature>
<feature type="binding site" evidence="1">
    <location>
        <position position="322"/>
    </location>
    <ligand>
        <name>DNA</name>
        <dbReference type="ChEBI" id="CHEBI:16991"/>
    </ligand>
</feature>
<dbReference type="EC" id="3.6.4.-" evidence="1"/>
<dbReference type="EMBL" id="CP000544">
    <property type="protein sequence ID" value="ABM62977.1"/>
    <property type="molecule type" value="Genomic_DNA"/>
</dbReference>
<dbReference type="RefSeq" id="WP_011814999.1">
    <property type="nucleotide sequence ID" value="NC_008789.1"/>
</dbReference>
<dbReference type="SMR" id="A1WZ65"/>
<dbReference type="STRING" id="349124.Hhal_2213"/>
<dbReference type="KEGG" id="hha:Hhal_2213"/>
<dbReference type="eggNOG" id="COG2255">
    <property type="taxonomic scope" value="Bacteria"/>
</dbReference>
<dbReference type="HOGENOM" id="CLU_055599_1_0_6"/>
<dbReference type="OrthoDB" id="9804478at2"/>
<dbReference type="Proteomes" id="UP000000647">
    <property type="component" value="Chromosome"/>
</dbReference>
<dbReference type="GO" id="GO:0005737">
    <property type="term" value="C:cytoplasm"/>
    <property type="evidence" value="ECO:0007669"/>
    <property type="project" value="UniProtKB-SubCell"/>
</dbReference>
<dbReference type="GO" id="GO:0048476">
    <property type="term" value="C:Holliday junction resolvase complex"/>
    <property type="evidence" value="ECO:0007669"/>
    <property type="project" value="UniProtKB-UniRule"/>
</dbReference>
<dbReference type="GO" id="GO:0005524">
    <property type="term" value="F:ATP binding"/>
    <property type="evidence" value="ECO:0007669"/>
    <property type="project" value="UniProtKB-UniRule"/>
</dbReference>
<dbReference type="GO" id="GO:0016887">
    <property type="term" value="F:ATP hydrolysis activity"/>
    <property type="evidence" value="ECO:0007669"/>
    <property type="project" value="InterPro"/>
</dbReference>
<dbReference type="GO" id="GO:0000400">
    <property type="term" value="F:four-way junction DNA binding"/>
    <property type="evidence" value="ECO:0007669"/>
    <property type="project" value="UniProtKB-UniRule"/>
</dbReference>
<dbReference type="GO" id="GO:0009378">
    <property type="term" value="F:four-way junction helicase activity"/>
    <property type="evidence" value="ECO:0007669"/>
    <property type="project" value="InterPro"/>
</dbReference>
<dbReference type="GO" id="GO:0006310">
    <property type="term" value="P:DNA recombination"/>
    <property type="evidence" value="ECO:0007669"/>
    <property type="project" value="UniProtKB-UniRule"/>
</dbReference>
<dbReference type="GO" id="GO:0006281">
    <property type="term" value="P:DNA repair"/>
    <property type="evidence" value="ECO:0007669"/>
    <property type="project" value="UniProtKB-UniRule"/>
</dbReference>
<dbReference type="CDD" id="cd00009">
    <property type="entry name" value="AAA"/>
    <property type="match status" value="1"/>
</dbReference>
<dbReference type="FunFam" id="3.40.50.300:FF:000073">
    <property type="entry name" value="Holliday junction ATP-dependent DNA helicase RuvB"/>
    <property type="match status" value="1"/>
</dbReference>
<dbReference type="Gene3D" id="1.10.8.60">
    <property type="match status" value="1"/>
</dbReference>
<dbReference type="Gene3D" id="3.40.50.300">
    <property type="entry name" value="P-loop containing nucleotide triphosphate hydrolases"/>
    <property type="match status" value="1"/>
</dbReference>
<dbReference type="Gene3D" id="1.10.10.10">
    <property type="entry name" value="Winged helix-like DNA-binding domain superfamily/Winged helix DNA-binding domain"/>
    <property type="match status" value="1"/>
</dbReference>
<dbReference type="HAMAP" id="MF_00016">
    <property type="entry name" value="DNA_HJ_migration_RuvB"/>
    <property type="match status" value="1"/>
</dbReference>
<dbReference type="InterPro" id="IPR003593">
    <property type="entry name" value="AAA+_ATPase"/>
</dbReference>
<dbReference type="InterPro" id="IPR041445">
    <property type="entry name" value="AAA_lid_4"/>
</dbReference>
<dbReference type="InterPro" id="IPR004605">
    <property type="entry name" value="DNA_helicase_Holl-junc_RuvB"/>
</dbReference>
<dbReference type="InterPro" id="IPR027417">
    <property type="entry name" value="P-loop_NTPase"/>
</dbReference>
<dbReference type="InterPro" id="IPR008824">
    <property type="entry name" value="RuvB-like_N"/>
</dbReference>
<dbReference type="InterPro" id="IPR008823">
    <property type="entry name" value="RuvB_C"/>
</dbReference>
<dbReference type="InterPro" id="IPR036388">
    <property type="entry name" value="WH-like_DNA-bd_sf"/>
</dbReference>
<dbReference type="InterPro" id="IPR036390">
    <property type="entry name" value="WH_DNA-bd_sf"/>
</dbReference>
<dbReference type="NCBIfam" id="NF000868">
    <property type="entry name" value="PRK00080.1"/>
    <property type="match status" value="1"/>
</dbReference>
<dbReference type="NCBIfam" id="TIGR00635">
    <property type="entry name" value="ruvB"/>
    <property type="match status" value="1"/>
</dbReference>
<dbReference type="PANTHER" id="PTHR42848">
    <property type="match status" value="1"/>
</dbReference>
<dbReference type="PANTHER" id="PTHR42848:SF1">
    <property type="entry name" value="HOLLIDAY JUNCTION BRANCH MIGRATION COMPLEX SUBUNIT RUVB"/>
    <property type="match status" value="1"/>
</dbReference>
<dbReference type="Pfam" id="PF17864">
    <property type="entry name" value="AAA_lid_4"/>
    <property type="match status" value="1"/>
</dbReference>
<dbReference type="Pfam" id="PF05491">
    <property type="entry name" value="RuvB_C"/>
    <property type="match status" value="1"/>
</dbReference>
<dbReference type="Pfam" id="PF05496">
    <property type="entry name" value="RuvB_N"/>
    <property type="match status" value="1"/>
</dbReference>
<dbReference type="SMART" id="SM00382">
    <property type="entry name" value="AAA"/>
    <property type="match status" value="1"/>
</dbReference>
<dbReference type="SUPFAM" id="SSF52540">
    <property type="entry name" value="P-loop containing nucleoside triphosphate hydrolases"/>
    <property type="match status" value="1"/>
</dbReference>
<dbReference type="SUPFAM" id="SSF46785">
    <property type="entry name" value="Winged helix' DNA-binding domain"/>
    <property type="match status" value="1"/>
</dbReference>
<gene>
    <name evidence="1" type="primary">ruvB</name>
    <name type="ordered locus">Hhal_2213</name>
</gene>
<organism>
    <name type="scientific">Halorhodospira halophila (strain DSM 244 / SL1)</name>
    <name type="common">Ectothiorhodospira halophila (strain DSM 244 / SL1)</name>
    <dbReference type="NCBI Taxonomy" id="349124"/>
    <lineage>
        <taxon>Bacteria</taxon>
        <taxon>Pseudomonadati</taxon>
        <taxon>Pseudomonadota</taxon>
        <taxon>Gammaproteobacteria</taxon>
        <taxon>Chromatiales</taxon>
        <taxon>Ectothiorhodospiraceae</taxon>
        <taxon>Halorhodospira</taxon>
    </lineage>
</organism>